<name>POTA_NITMU</name>
<evidence type="ECO:0000255" key="1">
    <source>
        <dbReference type="HAMAP-Rule" id="MF_01726"/>
    </source>
</evidence>
<gene>
    <name evidence="1" type="primary">potA</name>
    <name type="ordered locus">Nmul_A0982</name>
</gene>
<accession>Q2YAD6</accession>
<dbReference type="EC" id="7.6.2.11" evidence="1"/>
<dbReference type="EMBL" id="CP000103">
    <property type="protein sequence ID" value="ABB74285.1"/>
    <property type="molecule type" value="Genomic_DNA"/>
</dbReference>
<dbReference type="RefSeq" id="WP_011380330.1">
    <property type="nucleotide sequence ID" value="NC_007614.1"/>
</dbReference>
<dbReference type="SMR" id="Q2YAD6"/>
<dbReference type="STRING" id="323848.Nmul_A0982"/>
<dbReference type="KEGG" id="nmu:Nmul_A0982"/>
<dbReference type="eggNOG" id="COG3842">
    <property type="taxonomic scope" value="Bacteria"/>
</dbReference>
<dbReference type="HOGENOM" id="CLU_000604_1_1_4"/>
<dbReference type="OrthoDB" id="5298774at2"/>
<dbReference type="Proteomes" id="UP000002718">
    <property type="component" value="Chromosome"/>
</dbReference>
<dbReference type="GO" id="GO:0043190">
    <property type="term" value="C:ATP-binding cassette (ABC) transporter complex"/>
    <property type="evidence" value="ECO:0007669"/>
    <property type="project" value="InterPro"/>
</dbReference>
<dbReference type="GO" id="GO:0015417">
    <property type="term" value="F:ABC-type polyamine transporter activity"/>
    <property type="evidence" value="ECO:0007669"/>
    <property type="project" value="UniProtKB-EC"/>
</dbReference>
<dbReference type="GO" id="GO:0005524">
    <property type="term" value="F:ATP binding"/>
    <property type="evidence" value="ECO:0007669"/>
    <property type="project" value="UniProtKB-KW"/>
</dbReference>
<dbReference type="GO" id="GO:0016887">
    <property type="term" value="F:ATP hydrolysis activity"/>
    <property type="evidence" value="ECO:0007669"/>
    <property type="project" value="InterPro"/>
</dbReference>
<dbReference type="FunFam" id="3.40.50.300:FF:000133">
    <property type="entry name" value="Spermidine/putrescine import ATP-binding protein PotA"/>
    <property type="match status" value="1"/>
</dbReference>
<dbReference type="Gene3D" id="2.40.50.100">
    <property type="match status" value="1"/>
</dbReference>
<dbReference type="Gene3D" id="3.40.50.300">
    <property type="entry name" value="P-loop containing nucleotide triphosphate hydrolases"/>
    <property type="match status" value="1"/>
</dbReference>
<dbReference type="InterPro" id="IPR003593">
    <property type="entry name" value="AAA+_ATPase"/>
</dbReference>
<dbReference type="InterPro" id="IPR050093">
    <property type="entry name" value="ABC_SmlMolc_Importer"/>
</dbReference>
<dbReference type="InterPro" id="IPR003439">
    <property type="entry name" value="ABC_transporter-like_ATP-bd"/>
</dbReference>
<dbReference type="InterPro" id="IPR017871">
    <property type="entry name" value="ABC_transporter-like_CS"/>
</dbReference>
<dbReference type="InterPro" id="IPR008995">
    <property type="entry name" value="Mo/tungstate-bd_C_term_dom"/>
</dbReference>
<dbReference type="InterPro" id="IPR027417">
    <property type="entry name" value="P-loop_NTPase"/>
</dbReference>
<dbReference type="InterPro" id="IPR005893">
    <property type="entry name" value="PotA-like"/>
</dbReference>
<dbReference type="InterPro" id="IPR013611">
    <property type="entry name" value="Transp-assoc_OB_typ2"/>
</dbReference>
<dbReference type="NCBIfam" id="TIGR01187">
    <property type="entry name" value="potA"/>
    <property type="match status" value="1"/>
</dbReference>
<dbReference type="PANTHER" id="PTHR42781">
    <property type="entry name" value="SPERMIDINE/PUTRESCINE IMPORT ATP-BINDING PROTEIN POTA"/>
    <property type="match status" value="1"/>
</dbReference>
<dbReference type="PANTHER" id="PTHR42781:SF4">
    <property type="entry name" value="SPERMIDINE_PUTRESCINE IMPORT ATP-BINDING PROTEIN POTA"/>
    <property type="match status" value="1"/>
</dbReference>
<dbReference type="Pfam" id="PF00005">
    <property type="entry name" value="ABC_tran"/>
    <property type="match status" value="1"/>
</dbReference>
<dbReference type="Pfam" id="PF08402">
    <property type="entry name" value="TOBE_2"/>
    <property type="match status" value="1"/>
</dbReference>
<dbReference type="SMART" id="SM00382">
    <property type="entry name" value="AAA"/>
    <property type="match status" value="1"/>
</dbReference>
<dbReference type="SUPFAM" id="SSF50331">
    <property type="entry name" value="MOP-like"/>
    <property type="match status" value="1"/>
</dbReference>
<dbReference type="SUPFAM" id="SSF52540">
    <property type="entry name" value="P-loop containing nucleoside triphosphate hydrolases"/>
    <property type="match status" value="1"/>
</dbReference>
<dbReference type="PROSITE" id="PS00211">
    <property type="entry name" value="ABC_TRANSPORTER_1"/>
    <property type="match status" value="1"/>
</dbReference>
<dbReference type="PROSITE" id="PS50893">
    <property type="entry name" value="ABC_TRANSPORTER_2"/>
    <property type="match status" value="1"/>
</dbReference>
<dbReference type="PROSITE" id="PS51305">
    <property type="entry name" value="POTA"/>
    <property type="match status" value="1"/>
</dbReference>
<proteinExistence type="inferred from homology"/>
<organism>
    <name type="scientific">Nitrosospira multiformis (strain ATCC 25196 / NCIMB 11849 / C 71)</name>
    <dbReference type="NCBI Taxonomy" id="323848"/>
    <lineage>
        <taxon>Bacteria</taxon>
        <taxon>Pseudomonadati</taxon>
        <taxon>Pseudomonadota</taxon>
        <taxon>Betaproteobacteria</taxon>
        <taxon>Nitrosomonadales</taxon>
        <taxon>Nitrosomonadaceae</taxon>
        <taxon>Nitrosospira</taxon>
    </lineage>
</organism>
<sequence length="363" mass="40217">MALLEIRNVTRRFGGYTAVDNVSIDVEAGEFFTLLGPSGCGKTTLLRMIAGFDLPDSGQILLDGKDMVGIPPEKRPVHTVFQTYALFPHMTVADNIAFPLKMAGKAPQEIKKRVNELLERVHLPNFGNRFPHELSGGQKQRVAFARGLVNRPRLLLLDEPLGALDAKLREEMQIELINLQKEIGITFIFVTHAQDEALALSHRIAVMNRGNVEQIDEPSKIYSAPRNHFVADFIGKISVMNATVMEAVPSHLKLAIEGLGEVTAPAREGMEVGDKGVLAIRPEQVRISHPSNESQLKNHFRGKVHDFLYVGDVTTYIVELANGAYIEALLPNSAPGRAKFFEVDDEVTISWRHDAGIFLNDPE</sequence>
<reference key="1">
    <citation type="submission" date="2005-08" db="EMBL/GenBank/DDBJ databases">
        <title>Complete sequence of chromosome 1 of Nitrosospira multiformis ATCC 25196.</title>
        <authorList>
            <person name="Copeland A."/>
            <person name="Lucas S."/>
            <person name="Lapidus A."/>
            <person name="Barry K."/>
            <person name="Detter J.C."/>
            <person name="Glavina T."/>
            <person name="Hammon N."/>
            <person name="Israni S."/>
            <person name="Pitluck S."/>
            <person name="Chain P."/>
            <person name="Malfatti S."/>
            <person name="Shin M."/>
            <person name="Vergez L."/>
            <person name="Schmutz J."/>
            <person name="Larimer F."/>
            <person name="Land M."/>
            <person name="Hauser L."/>
            <person name="Kyrpides N."/>
            <person name="Lykidis A."/>
            <person name="Richardson P."/>
        </authorList>
    </citation>
    <scope>NUCLEOTIDE SEQUENCE [LARGE SCALE GENOMIC DNA]</scope>
    <source>
        <strain>ATCC 25196 / NCIMB 11849 / C 71</strain>
    </source>
</reference>
<protein>
    <recommendedName>
        <fullName evidence="1">Spermidine/putrescine import ATP-binding protein PotA</fullName>
        <ecNumber evidence="1">7.6.2.11</ecNumber>
    </recommendedName>
</protein>
<keyword id="KW-0067">ATP-binding</keyword>
<keyword id="KW-0997">Cell inner membrane</keyword>
<keyword id="KW-1003">Cell membrane</keyword>
<keyword id="KW-0472">Membrane</keyword>
<keyword id="KW-0547">Nucleotide-binding</keyword>
<keyword id="KW-1185">Reference proteome</keyword>
<keyword id="KW-1278">Translocase</keyword>
<keyword id="KW-0813">Transport</keyword>
<feature type="chain" id="PRO_0000286266" description="Spermidine/putrescine import ATP-binding protein PotA">
    <location>
        <begin position="1"/>
        <end position="363"/>
    </location>
</feature>
<feature type="domain" description="ABC transporter" evidence="1">
    <location>
        <begin position="4"/>
        <end position="234"/>
    </location>
</feature>
<feature type="binding site" evidence="1">
    <location>
        <begin position="36"/>
        <end position="43"/>
    </location>
    <ligand>
        <name>ATP</name>
        <dbReference type="ChEBI" id="CHEBI:30616"/>
    </ligand>
</feature>
<comment type="function">
    <text evidence="1">Part of the ABC transporter complex PotABCD involved in spermidine/putrescine import. Responsible for energy coupling to the transport system.</text>
</comment>
<comment type="catalytic activity">
    <reaction evidence="1">
        <text>ATP + H2O + polyamine-[polyamine-binding protein]Side 1 = ADP + phosphate + polyamineSide 2 + [polyamine-binding protein]Side 1.</text>
        <dbReference type="EC" id="7.6.2.11"/>
    </reaction>
</comment>
<comment type="subunit">
    <text evidence="1">The complex is composed of two ATP-binding proteins (PotA), two transmembrane proteins (PotB and PotC) and a solute-binding protein (PotD).</text>
</comment>
<comment type="subcellular location">
    <subcellularLocation>
        <location evidence="1">Cell inner membrane</location>
        <topology evidence="1">Peripheral membrane protein</topology>
    </subcellularLocation>
</comment>
<comment type="similarity">
    <text evidence="1">Belongs to the ABC transporter superfamily. Spermidine/putrescine importer (TC 3.A.1.11.1) family.</text>
</comment>